<organism>
    <name type="scientific">Shewanella baltica (strain OS223)</name>
    <dbReference type="NCBI Taxonomy" id="407976"/>
    <lineage>
        <taxon>Bacteria</taxon>
        <taxon>Pseudomonadati</taxon>
        <taxon>Pseudomonadota</taxon>
        <taxon>Gammaproteobacteria</taxon>
        <taxon>Alteromonadales</taxon>
        <taxon>Shewanellaceae</taxon>
        <taxon>Shewanella</taxon>
    </lineage>
</organism>
<proteinExistence type="inferred from homology"/>
<comment type="function">
    <text evidence="1">Channel that opens in response to stretch forces in the membrane lipid bilayer. May participate in the regulation of osmotic pressure changes within the cell.</text>
</comment>
<comment type="subunit">
    <text evidence="1">Homopentamer.</text>
</comment>
<comment type="subcellular location">
    <subcellularLocation>
        <location evidence="1">Cell inner membrane</location>
        <topology evidence="1">Multi-pass membrane protein</topology>
    </subcellularLocation>
</comment>
<comment type="similarity">
    <text evidence="1">Belongs to the MscL family.</text>
</comment>
<dbReference type="EMBL" id="CP001252">
    <property type="protein sequence ID" value="ACK48266.1"/>
    <property type="molecule type" value="Genomic_DNA"/>
</dbReference>
<dbReference type="RefSeq" id="WP_006084265.1">
    <property type="nucleotide sequence ID" value="NC_011663.1"/>
</dbReference>
<dbReference type="SMR" id="B8ECI1"/>
<dbReference type="GeneID" id="11773971"/>
<dbReference type="KEGG" id="sbp:Sbal223_3789"/>
<dbReference type="HOGENOM" id="CLU_095787_0_0_6"/>
<dbReference type="Proteomes" id="UP000002507">
    <property type="component" value="Chromosome"/>
</dbReference>
<dbReference type="GO" id="GO:0005886">
    <property type="term" value="C:plasma membrane"/>
    <property type="evidence" value="ECO:0007669"/>
    <property type="project" value="UniProtKB-SubCell"/>
</dbReference>
<dbReference type="GO" id="GO:0008381">
    <property type="term" value="F:mechanosensitive monoatomic ion channel activity"/>
    <property type="evidence" value="ECO:0007669"/>
    <property type="project" value="UniProtKB-UniRule"/>
</dbReference>
<dbReference type="FunFam" id="1.10.1200.120:FF:000001">
    <property type="entry name" value="Large-conductance mechanosensitive channel"/>
    <property type="match status" value="1"/>
</dbReference>
<dbReference type="Gene3D" id="1.10.1200.120">
    <property type="entry name" value="Large-conductance mechanosensitive channel, MscL, domain 1"/>
    <property type="match status" value="1"/>
</dbReference>
<dbReference type="HAMAP" id="MF_00115">
    <property type="entry name" value="MscL"/>
    <property type="match status" value="1"/>
</dbReference>
<dbReference type="InterPro" id="IPR019823">
    <property type="entry name" value="Mechanosensitive_channel_CS"/>
</dbReference>
<dbReference type="InterPro" id="IPR001185">
    <property type="entry name" value="MS_channel"/>
</dbReference>
<dbReference type="InterPro" id="IPR037673">
    <property type="entry name" value="MSC/AndL"/>
</dbReference>
<dbReference type="InterPro" id="IPR036019">
    <property type="entry name" value="MscL_channel"/>
</dbReference>
<dbReference type="NCBIfam" id="TIGR00220">
    <property type="entry name" value="mscL"/>
    <property type="match status" value="1"/>
</dbReference>
<dbReference type="NCBIfam" id="NF001843">
    <property type="entry name" value="PRK00567.1-4"/>
    <property type="match status" value="1"/>
</dbReference>
<dbReference type="PANTHER" id="PTHR30266:SF2">
    <property type="entry name" value="LARGE-CONDUCTANCE MECHANOSENSITIVE CHANNEL"/>
    <property type="match status" value="1"/>
</dbReference>
<dbReference type="PANTHER" id="PTHR30266">
    <property type="entry name" value="MECHANOSENSITIVE CHANNEL MSCL"/>
    <property type="match status" value="1"/>
</dbReference>
<dbReference type="Pfam" id="PF01741">
    <property type="entry name" value="MscL"/>
    <property type="match status" value="1"/>
</dbReference>
<dbReference type="PRINTS" id="PR01264">
    <property type="entry name" value="MECHCHANNEL"/>
</dbReference>
<dbReference type="SUPFAM" id="SSF81330">
    <property type="entry name" value="Gated mechanosensitive channel"/>
    <property type="match status" value="1"/>
</dbReference>
<dbReference type="PROSITE" id="PS01327">
    <property type="entry name" value="MSCL"/>
    <property type="match status" value="1"/>
</dbReference>
<reference key="1">
    <citation type="submission" date="2008-12" db="EMBL/GenBank/DDBJ databases">
        <title>Complete sequence of chromosome of Shewanella baltica OS223.</title>
        <authorList>
            <consortium name="US DOE Joint Genome Institute"/>
            <person name="Lucas S."/>
            <person name="Copeland A."/>
            <person name="Lapidus A."/>
            <person name="Glavina del Rio T."/>
            <person name="Dalin E."/>
            <person name="Tice H."/>
            <person name="Bruce D."/>
            <person name="Goodwin L."/>
            <person name="Pitluck S."/>
            <person name="Chertkov O."/>
            <person name="Meincke L."/>
            <person name="Brettin T."/>
            <person name="Detter J.C."/>
            <person name="Han C."/>
            <person name="Kuske C.R."/>
            <person name="Larimer F."/>
            <person name="Land M."/>
            <person name="Hauser L."/>
            <person name="Kyrpides N."/>
            <person name="Ovchinnikova G."/>
            <person name="Brettar I."/>
            <person name="Rodrigues J."/>
            <person name="Konstantinidis K."/>
            <person name="Tiedje J."/>
        </authorList>
    </citation>
    <scope>NUCLEOTIDE SEQUENCE [LARGE SCALE GENOMIC DNA]</scope>
    <source>
        <strain>OS223</strain>
    </source>
</reference>
<keyword id="KW-0997">Cell inner membrane</keyword>
<keyword id="KW-1003">Cell membrane</keyword>
<keyword id="KW-0407">Ion channel</keyword>
<keyword id="KW-0406">Ion transport</keyword>
<keyword id="KW-0472">Membrane</keyword>
<keyword id="KW-0812">Transmembrane</keyword>
<keyword id="KW-1133">Transmembrane helix</keyword>
<keyword id="KW-0813">Transport</keyword>
<protein>
    <recommendedName>
        <fullName evidence="1">Large-conductance mechanosensitive channel</fullName>
    </recommendedName>
</protein>
<evidence type="ECO:0000255" key="1">
    <source>
        <dbReference type="HAMAP-Rule" id="MF_00115"/>
    </source>
</evidence>
<gene>
    <name evidence="1" type="primary">mscL</name>
    <name type="ordered locus">Sbal223_3789</name>
</gene>
<name>MSCL_SHEB2</name>
<accession>B8ECI1</accession>
<feature type="chain" id="PRO_1000191385" description="Large-conductance mechanosensitive channel">
    <location>
        <begin position="1"/>
        <end position="136"/>
    </location>
</feature>
<feature type="transmembrane region" description="Helical" evidence="1">
    <location>
        <begin position="9"/>
        <end position="29"/>
    </location>
</feature>
<feature type="transmembrane region" description="Helical" evidence="1">
    <location>
        <begin position="79"/>
        <end position="99"/>
    </location>
</feature>
<sequence length="136" mass="14575">MSLIKEFKAFASRGNVIDMAVGIIIGAAFGKIVSSFVADIIMPPIGIILGGVNFSDLSIVLQAAQGDAPSVVIAYGKFIQTIIDFTIIAFAIFMGVKAINRLKRKEEVAPKAPAAPTKDQELLSEIRDLLKAQQEK</sequence>